<dbReference type="EC" id="2.7.7.68" evidence="1"/>
<dbReference type="EMBL" id="CP001696">
    <property type="protein sequence ID" value="ACV25270.1"/>
    <property type="molecule type" value="Genomic_DNA"/>
</dbReference>
<dbReference type="RefSeq" id="WP_015792003.1">
    <property type="nucleotide sequence ID" value="NC_013156.1"/>
</dbReference>
<dbReference type="SMR" id="C7P592"/>
<dbReference type="STRING" id="573064.Mefer_1466"/>
<dbReference type="GeneID" id="8366172"/>
<dbReference type="KEGG" id="mfe:Mefer_1466"/>
<dbReference type="eggNOG" id="arCOG04472">
    <property type="taxonomic scope" value="Archaea"/>
</dbReference>
<dbReference type="HOGENOM" id="CLU_076569_2_0_2"/>
<dbReference type="OrthoDB" id="11179at2157"/>
<dbReference type="UniPathway" id="UPA00071"/>
<dbReference type="Proteomes" id="UP000001495">
    <property type="component" value="Chromosome"/>
</dbReference>
<dbReference type="GO" id="GO:0005525">
    <property type="term" value="F:GTP binding"/>
    <property type="evidence" value="ECO:0007669"/>
    <property type="project" value="UniProtKB-KW"/>
</dbReference>
<dbReference type="GO" id="GO:0043814">
    <property type="term" value="F:phospholactate guanylyltransferase activity"/>
    <property type="evidence" value="ECO:0007669"/>
    <property type="project" value="UniProtKB-EC"/>
</dbReference>
<dbReference type="GO" id="GO:0052645">
    <property type="term" value="P:F420-0 metabolic process"/>
    <property type="evidence" value="ECO:0007669"/>
    <property type="project" value="UniProtKB-UniRule"/>
</dbReference>
<dbReference type="Gene3D" id="3.90.550.10">
    <property type="entry name" value="Spore Coat Polysaccharide Biosynthesis Protein SpsA, Chain A"/>
    <property type="match status" value="1"/>
</dbReference>
<dbReference type="HAMAP" id="MF_02114">
    <property type="entry name" value="CofC"/>
    <property type="match status" value="1"/>
</dbReference>
<dbReference type="InterPro" id="IPR002835">
    <property type="entry name" value="CofC"/>
</dbReference>
<dbReference type="InterPro" id="IPR029044">
    <property type="entry name" value="Nucleotide-diphossugar_trans"/>
</dbReference>
<dbReference type="NCBIfam" id="TIGR03552">
    <property type="entry name" value="F420_cofC"/>
    <property type="match status" value="1"/>
</dbReference>
<dbReference type="PANTHER" id="PTHR40392">
    <property type="entry name" value="2-PHOSPHO-L-LACTATE GUANYLYLTRANSFERASE"/>
    <property type="match status" value="1"/>
</dbReference>
<dbReference type="PANTHER" id="PTHR40392:SF1">
    <property type="entry name" value="2-PHOSPHO-L-LACTATE GUANYLYLTRANSFERASE"/>
    <property type="match status" value="1"/>
</dbReference>
<dbReference type="Pfam" id="PF01983">
    <property type="entry name" value="CofC"/>
    <property type="match status" value="1"/>
</dbReference>
<dbReference type="SUPFAM" id="SSF53448">
    <property type="entry name" value="Nucleotide-diphospho-sugar transferases"/>
    <property type="match status" value="1"/>
</dbReference>
<protein>
    <recommendedName>
        <fullName evidence="1">2-phospho-L-lactate guanylyltransferase</fullName>
        <shortName evidence="1">LP guanylyltransferase</shortName>
        <ecNumber evidence="1">2.7.7.68</ecNumber>
    </recommendedName>
</protein>
<gene>
    <name evidence="1" type="primary">cofC</name>
    <name type="ordered locus">Mefer_1466</name>
</gene>
<evidence type="ECO:0000255" key="1">
    <source>
        <dbReference type="HAMAP-Rule" id="MF_02114"/>
    </source>
</evidence>
<sequence>MKVIIPVSPINSLKTRLSEFLSSEERKNLLLNMLRDIKKALEGLDVVVVSRDDEILDFAKYELKAEIVKEKYKGLNNAIKQAFDEIDDEEVIIIPADIPLIKKKHIEDILKLSKDYDLIIASSRGGGTNLLYLKSKNLIELRYEGFSFLKHLEEAEKRNLRYYIYDSFLISVDINTPEDLGEIFIHGDNTYTKNYLKGLGIEVEPKHSSAGRFVVKRR</sequence>
<reference key="1">
    <citation type="submission" date="2009-08" db="EMBL/GenBank/DDBJ databases">
        <title>Complete sequence of chromosome of Methanocaldococcus fervens AG86.</title>
        <authorList>
            <consortium name="US DOE Joint Genome Institute"/>
            <person name="Lucas S."/>
            <person name="Copeland A."/>
            <person name="Lapidus A."/>
            <person name="Glavina del Rio T."/>
            <person name="Tice H."/>
            <person name="Bruce D."/>
            <person name="Goodwin L."/>
            <person name="Pitluck S."/>
            <person name="Chertkov O."/>
            <person name="Detter J.C."/>
            <person name="Han C."/>
            <person name="Tapia R."/>
            <person name="Larimer F."/>
            <person name="Land M."/>
            <person name="Hauser L."/>
            <person name="Kyrpides N."/>
            <person name="Ovchinnikova G."/>
            <person name="Lupa-Sieprawska M."/>
            <person name="Whitman W.B."/>
        </authorList>
    </citation>
    <scope>NUCLEOTIDE SEQUENCE [LARGE SCALE GENOMIC DNA]</scope>
    <source>
        <strain>DSM 4213 / JCM 15782 / AG86</strain>
    </source>
</reference>
<organism>
    <name type="scientific">Methanocaldococcus fervens (strain DSM 4213 / JCM 15782 / AG86)</name>
    <name type="common">Methanococcus fervens</name>
    <dbReference type="NCBI Taxonomy" id="573064"/>
    <lineage>
        <taxon>Archaea</taxon>
        <taxon>Methanobacteriati</taxon>
        <taxon>Methanobacteriota</taxon>
        <taxon>Methanomada group</taxon>
        <taxon>Methanococci</taxon>
        <taxon>Methanococcales</taxon>
        <taxon>Methanocaldococcaceae</taxon>
        <taxon>Methanocaldococcus</taxon>
    </lineage>
</organism>
<comment type="function">
    <text evidence="1">Guanylyltransferase that catalyzes the activation of (2S)-2-phospholactate (2-PL) as (2S)-lactyl-2-diphospho-5'-guanosine, via the condensation of 2-PL with GTP. It is involved in the biosynthesis of coenzyme F420, a hydride carrier cofactor.</text>
</comment>
<comment type="catalytic activity">
    <reaction evidence="1">
        <text>(2S)-2-phospholactate + GTP + H(+) = (2S)-lactyl-2-diphospho-5'-guanosine + diphosphate</text>
        <dbReference type="Rhea" id="RHEA:63424"/>
        <dbReference type="ChEBI" id="CHEBI:15378"/>
        <dbReference type="ChEBI" id="CHEBI:33019"/>
        <dbReference type="ChEBI" id="CHEBI:37565"/>
        <dbReference type="ChEBI" id="CHEBI:59435"/>
        <dbReference type="ChEBI" id="CHEBI:59906"/>
        <dbReference type="EC" id="2.7.7.68"/>
    </reaction>
</comment>
<comment type="pathway">
    <text evidence="1">Cofactor biosynthesis; coenzyme F420 biosynthesis.</text>
</comment>
<comment type="subunit">
    <text evidence="1">Homodimer.</text>
</comment>
<comment type="similarity">
    <text evidence="1">Belongs to the CofC family.</text>
</comment>
<keyword id="KW-0342">GTP-binding</keyword>
<keyword id="KW-0547">Nucleotide-binding</keyword>
<keyword id="KW-0548">Nucleotidyltransferase</keyword>
<keyword id="KW-0808">Transferase</keyword>
<name>COFC_METFA</name>
<accession>C7P592</accession>
<feature type="chain" id="PRO_0000398737" description="2-phospho-L-lactate guanylyltransferase">
    <location>
        <begin position="1"/>
        <end position="218"/>
    </location>
</feature>
<proteinExistence type="inferred from homology"/>